<sequence length="134" mass="14821">MSVTRGSAGDLRKGSYVILDDEPCEVLEVSKSKPGKHGSAKVRVEARGIFDGARRSKIFPADALVEIPIVDKKTAQVINVYGNVVQLMDLETYETFELPLPEDPELASRLKSGIEVEYWESMGKRKIVRTRGGV</sequence>
<gene>
    <name type="primary">eIF5A</name>
    <name type="ordered locus">Kcr_1589</name>
</gene>
<name>IF5A_KORCO</name>
<proteinExistence type="inferred from homology"/>
<keyword id="KW-0963">Cytoplasm</keyword>
<keyword id="KW-0385">Hypusine</keyword>
<keyword id="KW-0396">Initiation factor</keyword>
<keyword id="KW-0648">Protein biosynthesis</keyword>
<keyword id="KW-1185">Reference proteome</keyword>
<feature type="chain" id="PRO_1000093008" description="Translation initiation factor 5A">
    <location>
        <begin position="1"/>
        <end position="134"/>
    </location>
</feature>
<feature type="modified residue" description="Hypusine" evidence="1">
    <location>
        <position position="36"/>
    </location>
</feature>
<dbReference type="EMBL" id="CP000968">
    <property type="protein sequence ID" value="ACB08334.1"/>
    <property type="molecule type" value="Genomic_DNA"/>
</dbReference>
<dbReference type="RefSeq" id="WP_012310231.1">
    <property type="nucleotide sequence ID" value="NC_010482.1"/>
</dbReference>
<dbReference type="SMR" id="B1L7A5"/>
<dbReference type="FunCoup" id="B1L7A5">
    <property type="interactions" value="147"/>
</dbReference>
<dbReference type="STRING" id="374847.Kcr_1589"/>
<dbReference type="EnsemblBacteria" id="ACB08334">
    <property type="protein sequence ID" value="ACB08334"/>
    <property type="gene ID" value="Kcr_1589"/>
</dbReference>
<dbReference type="GeneID" id="6094865"/>
<dbReference type="KEGG" id="kcr:Kcr_1589"/>
<dbReference type="eggNOG" id="arCOG04277">
    <property type="taxonomic scope" value="Archaea"/>
</dbReference>
<dbReference type="HOGENOM" id="CLU_102600_3_0_2"/>
<dbReference type="InParanoid" id="B1L7A5"/>
<dbReference type="OrthoDB" id="23689at2157"/>
<dbReference type="PhylomeDB" id="B1L7A5"/>
<dbReference type="Proteomes" id="UP000001686">
    <property type="component" value="Chromosome"/>
</dbReference>
<dbReference type="GO" id="GO:0005737">
    <property type="term" value="C:cytoplasm"/>
    <property type="evidence" value="ECO:0007669"/>
    <property type="project" value="UniProtKB-SubCell"/>
</dbReference>
<dbReference type="GO" id="GO:0043022">
    <property type="term" value="F:ribosome binding"/>
    <property type="evidence" value="ECO:0007669"/>
    <property type="project" value="InterPro"/>
</dbReference>
<dbReference type="GO" id="GO:0003723">
    <property type="term" value="F:RNA binding"/>
    <property type="evidence" value="ECO:0007669"/>
    <property type="project" value="InterPro"/>
</dbReference>
<dbReference type="GO" id="GO:0003746">
    <property type="term" value="F:translation elongation factor activity"/>
    <property type="evidence" value="ECO:0000318"/>
    <property type="project" value="GO_Central"/>
</dbReference>
<dbReference type="GO" id="GO:0003743">
    <property type="term" value="F:translation initiation factor activity"/>
    <property type="evidence" value="ECO:0007669"/>
    <property type="project" value="UniProtKB-UniRule"/>
</dbReference>
<dbReference type="GO" id="GO:0045901">
    <property type="term" value="P:positive regulation of translational elongation"/>
    <property type="evidence" value="ECO:0007669"/>
    <property type="project" value="InterPro"/>
</dbReference>
<dbReference type="GO" id="GO:0045905">
    <property type="term" value="P:positive regulation of translational termination"/>
    <property type="evidence" value="ECO:0007669"/>
    <property type="project" value="InterPro"/>
</dbReference>
<dbReference type="GO" id="GO:0006414">
    <property type="term" value="P:translational elongation"/>
    <property type="evidence" value="ECO:0000318"/>
    <property type="project" value="GO_Central"/>
</dbReference>
<dbReference type="CDD" id="cd04467">
    <property type="entry name" value="S1_aIF5A"/>
    <property type="match status" value="1"/>
</dbReference>
<dbReference type="FunFam" id="2.40.50.140:FF:000334">
    <property type="entry name" value="Translation initiation factor 5A"/>
    <property type="match status" value="1"/>
</dbReference>
<dbReference type="Gene3D" id="2.30.30.30">
    <property type="match status" value="1"/>
</dbReference>
<dbReference type="Gene3D" id="2.40.50.140">
    <property type="entry name" value="Nucleic acid-binding proteins"/>
    <property type="match status" value="1"/>
</dbReference>
<dbReference type="HAMAP" id="MF_00085">
    <property type="entry name" value="eIF_5A"/>
    <property type="match status" value="1"/>
</dbReference>
<dbReference type="InterPro" id="IPR001884">
    <property type="entry name" value="IF5A-like"/>
</dbReference>
<dbReference type="InterPro" id="IPR048670">
    <property type="entry name" value="IF5A-like_N"/>
</dbReference>
<dbReference type="InterPro" id="IPR012340">
    <property type="entry name" value="NA-bd_OB-fold"/>
</dbReference>
<dbReference type="InterPro" id="IPR014722">
    <property type="entry name" value="Rib_uL2_dom2"/>
</dbReference>
<dbReference type="InterPro" id="IPR019769">
    <property type="entry name" value="Trans_elong_IF5A_hypusine_site"/>
</dbReference>
<dbReference type="InterPro" id="IPR022847">
    <property type="entry name" value="Transl_elong_IF5A_arc"/>
</dbReference>
<dbReference type="InterPro" id="IPR020189">
    <property type="entry name" value="Transl_elong_IF5A_C"/>
</dbReference>
<dbReference type="InterPro" id="IPR008991">
    <property type="entry name" value="Translation_prot_SH3-like_sf"/>
</dbReference>
<dbReference type="NCBIfam" id="TIGR00037">
    <property type="entry name" value="eIF_5A"/>
    <property type="match status" value="1"/>
</dbReference>
<dbReference type="NCBIfam" id="NF003076">
    <property type="entry name" value="PRK03999.1"/>
    <property type="match status" value="1"/>
</dbReference>
<dbReference type="PANTHER" id="PTHR11673">
    <property type="entry name" value="TRANSLATION INITIATION FACTOR 5A FAMILY MEMBER"/>
    <property type="match status" value="1"/>
</dbReference>
<dbReference type="Pfam" id="PF01287">
    <property type="entry name" value="eIF-5a"/>
    <property type="match status" value="1"/>
</dbReference>
<dbReference type="Pfam" id="PF21485">
    <property type="entry name" value="IF5A-like_N"/>
    <property type="match status" value="1"/>
</dbReference>
<dbReference type="PIRSF" id="PIRSF003025">
    <property type="entry name" value="eIF5A"/>
    <property type="match status" value="1"/>
</dbReference>
<dbReference type="SMART" id="SM01376">
    <property type="entry name" value="eIF-5a"/>
    <property type="match status" value="1"/>
</dbReference>
<dbReference type="SUPFAM" id="SSF50249">
    <property type="entry name" value="Nucleic acid-binding proteins"/>
    <property type="match status" value="1"/>
</dbReference>
<dbReference type="SUPFAM" id="SSF50104">
    <property type="entry name" value="Translation proteins SH3-like domain"/>
    <property type="match status" value="1"/>
</dbReference>
<dbReference type="PROSITE" id="PS00302">
    <property type="entry name" value="IF5A_HYPUSINE"/>
    <property type="match status" value="1"/>
</dbReference>
<protein>
    <recommendedName>
        <fullName evidence="1">Translation initiation factor 5A</fullName>
    </recommendedName>
    <alternativeName>
        <fullName evidence="1">Hypusine-containing protein</fullName>
    </alternativeName>
    <alternativeName>
        <fullName evidence="1">eIF-5A</fullName>
    </alternativeName>
</protein>
<accession>B1L7A5</accession>
<organism>
    <name type="scientific">Korarchaeum cryptofilum (strain OPF8)</name>
    <dbReference type="NCBI Taxonomy" id="374847"/>
    <lineage>
        <taxon>Archaea</taxon>
        <taxon>Thermoproteota</taxon>
        <taxon>Candidatus Korarchaeia</taxon>
        <taxon>Candidatus Korarchaeales</taxon>
        <taxon>Candidatus Korarchaeaceae</taxon>
        <taxon>Candidatus Korarchaeum</taxon>
    </lineage>
</organism>
<evidence type="ECO:0000255" key="1">
    <source>
        <dbReference type="HAMAP-Rule" id="MF_00085"/>
    </source>
</evidence>
<reference key="1">
    <citation type="journal article" date="2008" name="Proc. Natl. Acad. Sci. U.S.A.">
        <title>A korarchaeal genome reveals new insights into the evolution of the Archaea.</title>
        <authorList>
            <person name="Elkins J.G."/>
            <person name="Podar M."/>
            <person name="Graham D.E."/>
            <person name="Makarova K.S."/>
            <person name="Wolf Y."/>
            <person name="Randau L."/>
            <person name="Hedlund B.P."/>
            <person name="Brochier-Armanet C."/>
            <person name="Kunin V."/>
            <person name="Anderson I."/>
            <person name="Lapidus A."/>
            <person name="Goltsman E."/>
            <person name="Barry K."/>
            <person name="Koonin E.V."/>
            <person name="Hugenholtz P."/>
            <person name="Kyrpides N."/>
            <person name="Wanner G."/>
            <person name="Richardson P."/>
            <person name="Keller M."/>
            <person name="Stetter K.O."/>
        </authorList>
    </citation>
    <scope>NUCLEOTIDE SEQUENCE [LARGE SCALE GENOMIC DNA]</scope>
    <source>
        <strain>OPF8</strain>
    </source>
</reference>
<comment type="function">
    <text evidence="1">Functions by promoting the formation of the first peptide bond.</text>
</comment>
<comment type="subcellular location">
    <subcellularLocation>
        <location evidence="1">Cytoplasm</location>
    </subcellularLocation>
</comment>
<comment type="similarity">
    <text evidence="1">Belongs to the eIF-5A family.</text>
</comment>